<sequence length="133" mass="14105">MPNIVEIAVSDERFSTLVTAVTAANLVDVLQSPGPFTVFAPTDTAFAKLPPGTITTLVQNIPQLARILTYHVVAGKFTQADLCRLSTVDSVEGSPIAIDCTEGFEVKNATVIIPDIEADNGIIHVIDNVILMG</sequence>
<reference key="1">
    <citation type="journal article" date="1996" name="DNA Res.">
        <title>Sequence analysis of the genome of the unicellular cyanobacterium Synechocystis sp. strain PCC6803. II. Sequence determination of the entire genome and assignment of potential protein-coding regions.</title>
        <authorList>
            <person name="Kaneko T."/>
            <person name="Sato S."/>
            <person name="Kotani H."/>
            <person name="Tanaka A."/>
            <person name="Asamizu E."/>
            <person name="Nakamura Y."/>
            <person name="Miyajima N."/>
            <person name="Hirosawa M."/>
            <person name="Sugiura M."/>
            <person name="Sasamoto S."/>
            <person name="Kimura T."/>
            <person name="Hosouchi T."/>
            <person name="Matsuno A."/>
            <person name="Muraki A."/>
            <person name="Nakazaki N."/>
            <person name="Naruo K."/>
            <person name="Okumura S."/>
            <person name="Shimpo S."/>
            <person name="Takeuchi C."/>
            <person name="Wada T."/>
            <person name="Watanabe A."/>
            <person name="Yamada M."/>
            <person name="Yasuda M."/>
            <person name="Tabata S."/>
        </authorList>
    </citation>
    <scope>NUCLEOTIDE SEQUENCE [LARGE SCALE GENOMIC DNA]</scope>
    <source>
        <strain>ATCC 27184 / PCC 6803 / Kazusa</strain>
    </source>
</reference>
<proteinExistence type="predicted"/>
<feature type="chain" id="PRO_0000157894" description="Uncharacterized protein sll1735">
    <location>
        <begin position="1"/>
        <end position="133"/>
    </location>
</feature>
<feature type="domain" description="FAS1" evidence="1">
    <location>
        <begin position="1"/>
        <end position="130"/>
    </location>
</feature>
<keyword id="KW-1185">Reference proteome</keyword>
<gene>
    <name type="ordered locus">sll1735</name>
</gene>
<accession>P73392</accession>
<organism>
    <name type="scientific">Synechocystis sp. (strain ATCC 27184 / PCC 6803 / Kazusa)</name>
    <dbReference type="NCBI Taxonomy" id="1111708"/>
    <lineage>
        <taxon>Bacteria</taxon>
        <taxon>Bacillati</taxon>
        <taxon>Cyanobacteriota</taxon>
        <taxon>Cyanophyceae</taxon>
        <taxon>Synechococcales</taxon>
        <taxon>Merismopediaceae</taxon>
        <taxon>Synechocystis</taxon>
    </lineage>
</organism>
<protein>
    <recommendedName>
        <fullName>Uncharacterized protein sll1735</fullName>
    </recommendedName>
</protein>
<evidence type="ECO:0000255" key="1">
    <source>
        <dbReference type="PROSITE-ProRule" id="PRU00082"/>
    </source>
</evidence>
<name>Y1735_SYNY3</name>
<dbReference type="EMBL" id="BA000022">
    <property type="protein sequence ID" value="BAA17432.1"/>
    <property type="molecule type" value="Genomic_DNA"/>
</dbReference>
<dbReference type="PIR" id="S77329">
    <property type="entry name" value="S77329"/>
</dbReference>
<dbReference type="SMR" id="P73392"/>
<dbReference type="IntAct" id="P73392">
    <property type="interactions" value="1"/>
</dbReference>
<dbReference type="STRING" id="1148.gene:10498296"/>
<dbReference type="PaxDb" id="1148-1652511"/>
<dbReference type="EnsemblBacteria" id="BAA17432">
    <property type="protein sequence ID" value="BAA17432"/>
    <property type="gene ID" value="BAA17432"/>
</dbReference>
<dbReference type="KEGG" id="syn:sll1735"/>
<dbReference type="eggNOG" id="COG2335">
    <property type="taxonomic scope" value="Bacteria"/>
</dbReference>
<dbReference type="InParanoid" id="P73392"/>
<dbReference type="PhylomeDB" id="P73392"/>
<dbReference type="Proteomes" id="UP000001425">
    <property type="component" value="Chromosome"/>
</dbReference>
<dbReference type="FunFam" id="2.30.180.10:FF:000019">
    <property type="entry name" value="Cell surface lipoprotein"/>
    <property type="match status" value="1"/>
</dbReference>
<dbReference type="Gene3D" id="2.30.180.10">
    <property type="entry name" value="FAS1 domain"/>
    <property type="match status" value="1"/>
</dbReference>
<dbReference type="InterPro" id="IPR050904">
    <property type="entry name" value="Adhesion/Biosynth-related"/>
</dbReference>
<dbReference type="InterPro" id="IPR036378">
    <property type="entry name" value="FAS1_dom_sf"/>
</dbReference>
<dbReference type="InterPro" id="IPR000782">
    <property type="entry name" value="FAS1_domain"/>
</dbReference>
<dbReference type="PANTHER" id="PTHR10900:SF77">
    <property type="entry name" value="FI19380P1"/>
    <property type="match status" value="1"/>
</dbReference>
<dbReference type="PANTHER" id="PTHR10900">
    <property type="entry name" value="PERIOSTIN-RELATED"/>
    <property type="match status" value="1"/>
</dbReference>
<dbReference type="Pfam" id="PF02469">
    <property type="entry name" value="Fasciclin"/>
    <property type="match status" value="1"/>
</dbReference>
<dbReference type="SMART" id="SM00554">
    <property type="entry name" value="FAS1"/>
    <property type="match status" value="1"/>
</dbReference>
<dbReference type="SUPFAM" id="SSF82153">
    <property type="entry name" value="FAS1 domain"/>
    <property type="match status" value="1"/>
</dbReference>
<dbReference type="PROSITE" id="PS50213">
    <property type="entry name" value="FAS1"/>
    <property type="match status" value="1"/>
</dbReference>